<comment type="function">
    <text evidence="1">Catalyzes 2 different reactions between oxygen and the acireductone 1,2-dihydroxy-3-keto-5-methylthiopentene (DHK-MTPene) depending upon the metal bound in the active site. Fe-containing acireductone dioxygenase (Fe-ARD) produces formate and 2-keto-4-methylthiobutyrate (KMTB), the alpha-ketoacid precursor of methionine in the methionine recycle pathway. Ni-containing acireductone dioxygenase (Ni-ARD) produces methylthiopropionate, carbon monoxide and formate, and does not lie on the methionine recycle pathway.</text>
</comment>
<comment type="catalytic activity">
    <reaction evidence="1">
        <text>1,2-dihydroxy-5-(methylsulfanyl)pent-1-en-3-one + O2 = 4-methylsulfanyl-2-oxobutanoate + formate + 2 H(+)</text>
        <dbReference type="Rhea" id="RHEA:24504"/>
        <dbReference type="ChEBI" id="CHEBI:15378"/>
        <dbReference type="ChEBI" id="CHEBI:15379"/>
        <dbReference type="ChEBI" id="CHEBI:15740"/>
        <dbReference type="ChEBI" id="CHEBI:16723"/>
        <dbReference type="ChEBI" id="CHEBI:49252"/>
        <dbReference type="EC" id="1.13.11.54"/>
    </reaction>
</comment>
<comment type="catalytic activity">
    <reaction evidence="1">
        <text>1,2-dihydroxy-5-(methylsulfanyl)pent-1-en-3-one + O2 = 3-(methylsulfanyl)propanoate + CO + formate + 2 H(+)</text>
        <dbReference type="Rhea" id="RHEA:14161"/>
        <dbReference type="ChEBI" id="CHEBI:15378"/>
        <dbReference type="ChEBI" id="CHEBI:15379"/>
        <dbReference type="ChEBI" id="CHEBI:15740"/>
        <dbReference type="ChEBI" id="CHEBI:17245"/>
        <dbReference type="ChEBI" id="CHEBI:49016"/>
        <dbReference type="ChEBI" id="CHEBI:49252"/>
        <dbReference type="EC" id="1.13.11.53"/>
    </reaction>
</comment>
<comment type="cofactor">
    <cofactor evidence="1">
        <name>Fe(2+)</name>
        <dbReference type="ChEBI" id="CHEBI:29033"/>
    </cofactor>
    <cofactor evidence="1">
        <name>Ni(2+)</name>
        <dbReference type="ChEBI" id="CHEBI:49786"/>
    </cofactor>
    <text evidence="1">Binds either 1 Fe or Ni cation per monomer. Iron-binding promotes an acireductone dioxygenase reaction producing 2-keto-4-methylthiobutyrate, while nickel-binding promotes an acireductone dioxygenase reaction producing 3-(methylsulfanyl)propanoate.</text>
</comment>
<comment type="pathway">
    <text evidence="1">Amino-acid biosynthesis; L-methionine biosynthesis via salvage pathway; L-methionine from S-methyl-5-thio-alpha-D-ribose 1-phosphate: step 5/6.</text>
</comment>
<comment type="subunit">
    <text evidence="1">Monomer. Interacts with MMP14.</text>
</comment>
<comment type="subcellular location">
    <subcellularLocation>
        <location evidence="1">Cytoplasm</location>
    </subcellularLocation>
    <subcellularLocation>
        <location evidence="1">Nucleus</location>
    </subcellularLocation>
    <subcellularLocation>
        <location evidence="1">Cell membrane</location>
        <topology evidence="1">Peripheral membrane protein</topology>
        <orientation evidence="1">Cytoplasmic side</orientation>
    </subcellularLocation>
    <text evidence="1">Localizes to the plasma membrane when complexed to MMP14.</text>
</comment>
<comment type="similarity">
    <text evidence="1">Belongs to the acireductone dioxygenase (ARD) family.</text>
</comment>
<organism>
    <name type="scientific">Danio rerio</name>
    <name type="common">Zebrafish</name>
    <name type="synonym">Brachydanio rerio</name>
    <dbReference type="NCBI Taxonomy" id="7955"/>
    <lineage>
        <taxon>Eukaryota</taxon>
        <taxon>Metazoa</taxon>
        <taxon>Chordata</taxon>
        <taxon>Craniata</taxon>
        <taxon>Vertebrata</taxon>
        <taxon>Euteleostomi</taxon>
        <taxon>Actinopterygii</taxon>
        <taxon>Neopterygii</taxon>
        <taxon>Teleostei</taxon>
        <taxon>Ostariophysi</taxon>
        <taxon>Cypriniformes</taxon>
        <taxon>Danionidae</taxon>
        <taxon>Danioninae</taxon>
        <taxon>Danio</taxon>
    </lineage>
</organism>
<feature type="chain" id="PRO_0000223188" description="Acireductone dioxygenase">
    <location>
        <begin position="1"/>
        <end position="181"/>
    </location>
</feature>
<feature type="binding site" evidence="1">
    <location>
        <position position="91"/>
    </location>
    <ligand>
        <name>Fe(2+)</name>
        <dbReference type="ChEBI" id="CHEBI:29033"/>
        <note>for iron-dependent acireductone dioxygenase activity</note>
    </ligand>
</feature>
<feature type="binding site" evidence="1">
    <location>
        <position position="91"/>
    </location>
    <ligand>
        <name>Ni(2+)</name>
        <dbReference type="ChEBI" id="CHEBI:49786"/>
        <note>for nickel-dependent acireductone dioxygenase activity</note>
    </ligand>
</feature>
<feature type="binding site" evidence="1">
    <location>
        <position position="93"/>
    </location>
    <ligand>
        <name>Fe(2+)</name>
        <dbReference type="ChEBI" id="CHEBI:29033"/>
        <note>for iron-dependent acireductone dioxygenase activity</note>
    </ligand>
</feature>
<feature type="binding site" evidence="1">
    <location>
        <position position="93"/>
    </location>
    <ligand>
        <name>Ni(2+)</name>
        <dbReference type="ChEBI" id="CHEBI:49786"/>
        <note>for nickel-dependent acireductone dioxygenase activity</note>
    </ligand>
</feature>
<feature type="binding site" evidence="1">
    <location>
        <position position="97"/>
    </location>
    <ligand>
        <name>Fe(2+)</name>
        <dbReference type="ChEBI" id="CHEBI:29033"/>
        <note>for iron-dependent acireductone dioxygenase activity</note>
    </ligand>
</feature>
<feature type="binding site" evidence="1">
    <location>
        <position position="97"/>
    </location>
    <ligand>
        <name>Ni(2+)</name>
        <dbReference type="ChEBI" id="CHEBI:49786"/>
        <note>for nickel-dependent acireductone dioxygenase activity</note>
    </ligand>
</feature>
<feature type="binding site" evidence="1">
    <location>
        <position position="136"/>
    </location>
    <ligand>
        <name>Fe(2+)</name>
        <dbReference type="ChEBI" id="CHEBI:29033"/>
        <note>for iron-dependent acireductone dioxygenase activity</note>
    </ligand>
</feature>
<feature type="binding site" evidence="1">
    <location>
        <position position="136"/>
    </location>
    <ligand>
        <name>Ni(2+)</name>
        <dbReference type="ChEBI" id="CHEBI:49786"/>
        <note>for nickel-dependent acireductone dioxygenase activity</note>
    </ligand>
</feature>
<feature type="sequence conflict" description="In Ref. 2; AAH59549." evidence="2" ref="2">
    <original>G</original>
    <variation>R</variation>
    <location>
        <position position="179"/>
    </location>
</feature>
<evidence type="ECO:0000255" key="1">
    <source>
        <dbReference type="HAMAP-Rule" id="MF_03154"/>
    </source>
</evidence>
<evidence type="ECO:0000305" key="2"/>
<proteinExistence type="evidence at transcript level"/>
<keyword id="KW-0028">Amino-acid biosynthesis</keyword>
<keyword id="KW-1003">Cell membrane</keyword>
<keyword id="KW-0963">Cytoplasm</keyword>
<keyword id="KW-0223">Dioxygenase</keyword>
<keyword id="KW-0408">Iron</keyword>
<keyword id="KW-0472">Membrane</keyword>
<keyword id="KW-0479">Metal-binding</keyword>
<keyword id="KW-0486">Methionine biosynthesis</keyword>
<keyword id="KW-0533">Nickel</keyword>
<keyword id="KW-0539">Nucleus</keyword>
<keyword id="KW-0560">Oxidoreductase</keyword>
<keyword id="KW-1185">Reference proteome</keyword>
<accession>Q6PBX5</accession>
<accession>E7FAD8</accession>
<protein>
    <recommendedName>
        <fullName evidence="1">Acireductone dioxygenase</fullName>
    </recommendedName>
    <alternativeName>
        <fullName evidence="1">Acireductone dioxygenase (Fe(2+)-requiring)</fullName>
        <shortName evidence="1">ARD'</shortName>
        <shortName evidence="1">Fe-ARD</shortName>
        <ecNumber evidence="1">1.13.11.54</ecNumber>
    </alternativeName>
    <alternativeName>
        <fullName evidence="1">Acireductone dioxygenase (Ni(2+)-requiring)</fullName>
        <shortName evidence="1">ARD</shortName>
        <shortName evidence="1">Ni-ARD</shortName>
        <ecNumber evidence="1">1.13.11.53</ecNumber>
    </alternativeName>
    <alternativeName>
        <fullName evidence="1">Membrane-type 1 matrix metalloproteinase cytoplasmic tail-binding protein 1</fullName>
        <shortName evidence="1">MTCBP-1</shortName>
    </alternativeName>
</protein>
<name>MTND_DANRE</name>
<gene>
    <name type="primary">adi1</name>
    <name type="synonym">mtcbp1</name>
    <name type="ORF">zgc:73201</name>
</gene>
<dbReference type="EC" id="1.13.11.54" evidence="1"/>
<dbReference type="EC" id="1.13.11.53" evidence="1"/>
<dbReference type="EMBL" id="CU634006">
    <property type="status" value="NOT_ANNOTATED_CDS"/>
    <property type="molecule type" value="Genomic_DNA"/>
</dbReference>
<dbReference type="EMBL" id="BC059549">
    <property type="protein sequence ID" value="AAH59549.1"/>
    <property type="molecule type" value="mRNA"/>
</dbReference>
<dbReference type="RefSeq" id="NP_001232841.1">
    <property type="nucleotide sequence ID" value="NM_001245912.1"/>
</dbReference>
<dbReference type="RefSeq" id="NP_955962.2">
    <property type="nucleotide sequence ID" value="NM_199668.2"/>
</dbReference>
<dbReference type="SMR" id="Q6PBX5"/>
<dbReference type="FunCoup" id="Q6PBX5">
    <property type="interactions" value="1334"/>
</dbReference>
<dbReference type="STRING" id="7955.ENSDARP00000025996"/>
<dbReference type="PaxDb" id="7955-ENSDARP00000025996"/>
<dbReference type="Ensembl" id="ENSDART00000025229">
    <property type="protein sequence ID" value="ENSDARP00000025996"/>
    <property type="gene ID" value="ENSDARG00000020448"/>
</dbReference>
<dbReference type="GeneID" id="324079"/>
<dbReference type="KEGG" id="dre:324079"/>
<dbReference type="AGR" id="ZFIN:ZDB-GENE-030131-2799"/>
<dbReference type="CTD" id="55256"/>
<dbReference type="ZFIN" id="ZDB-GENE-030131-2799">
    <property type="gene designation" value="adi1"/>
</dbReference>
<dbReference type="eggNOG" id="KOG2107">
    <property type="taxonomic scope" value="Eukaryota"/>
</dbReference>
<dbReference type="HOGENOM" id="CLU_090154_0_1_1"/>
<dbReference type="InParanoid" id="Q6PBX5"/>
<dbReference type="OMA" id="WYMDESQ"/>
<dbReference type="OrthoDB" id="1867259at2759"/>
<dbReference type="PhylomeDB" id="Q6PBX5"/>
<dbReference type="TreeFam" id="TF300231"/>
<dbReference type="Reactome" id="R-DRE-1237112">
    <property type="pathway name" value="Methionine salvage pathway"/>
</dbReference>
<dbReference type="UniPathway" id="UPA00904">
    <property type="reaction ID" value="UER00878"/>
</dbReference>
<dbReference type="PRO" id="PR:Q6PBX5"/>
<dbReference type="Proteomes" id="UP000000437">
    <property type="component" value="Chromosome 17"/>
</dbReference>
<dbReference type="Bgee" id="ENSDARG00000020448">
    <property type="expression patterns" value="Expressed in intestine and 36 other cell types or tissues"/>
</dbReference>
<dbReference type="GO" id="GO:0005737">
    <property type="term" value="C:cytoplasm"/>
    <property type="evidence" value="ECO:0000250"/>
    <property type="project" value="UniProtKB"/>
</dbReference>
<dbReference type="GO" id="GO:0005634">
    <property type="term" value="C:nucleus"/>
    <property type="evidence" value="ECO:0000250"/>
    <property type="project" value="UniProtKB"/>
</dbReference>
<dbReference type="GO" id="GO:0005886">
    <property type="term" value="C:plasma membrane"/>
    <property type="evidence" value="ECO:0000250"/>
    <property type="project" value="UniProtKB"/>
</dbReference>
<dbReference type="GO" id="GO:0010308">
    <property type="term" value="F:acireductone dioxygenase (Ni2+-requiring) activity"/>
    <property type="evidence" value="ECO:0007669"/>
    <property type="project" value="UniProtKB-UniRule"/>
</dbReference>
<dbReference type="GO" id="GO:0010309">
    <property type="term" value="F:acireductone dioxygenase [iron(II)-requiring] activity"/>
    <property type="evidence" value="ECO:0000318"/>
    <property type="project" value="GO_Central"/>
</dbReference>
<dbReference type="GO" id="GO:0005506">
    <property type="term" value="F:iron ion binding"/>
    <property type="evidence" value="ECO:0007669"/>
    <property type="project" value="UniProtKB-UniRule"/>
</dbReference>
<dbReference type="GO" id="GO:0016151">
    <property type="term" value="F:nickel cation binding"/>
    <property type="evidence" value="ECO:0007669"/>
    <property type="project" value="UniProtKB-UniRule"/>
</dbReference>
<dbReference type="GO" id="GO:0016491">
    <property type="term" value="F:oxidoreductase activity"/>
    <property type="evidence" value="ECO:0000250"/>
    <property type="project" value="UniProtKB"/>
</dbReference>
<dbReference type="GO" id="GO:0019509">
    <property type="term" value="P:L-methionine salvage from methylthioadenosine"/>
    <property type="evidence" value="ECO:0000250"/>
    <property type="project" value="UniProtKB"/>
</dbReference>
<dbReference type="GO" id="GO:0006555">
    <property type="term" value="P:methionine metabolic process"/>
    <property type="evidence" value="ECO:0000318"/>
    <property type="project" value="GO_Central"/>
</dbReference>
<dbReference type="CDD" id="cd02232">
    <property type="entry name" value="cupin_ARD"/>
    <property type="match status" value="1"/>
</dbReference>
<dbReference type="FunFam" id="2.60.120.10:FF:000031">
    <property type="entry name" value="1,2-dihydroxy-3-keto-5-methylthiopentene dioxygenase"/>
    <property type="match status" value="1"/>
</dbReference>
<dbReference type="Gene3D" id="2.60.120.10">
    <property type="entry name" value="Jelly Rolls"/>
    <property type="match status" value="1"/>
</dbReference>
<dbReference type="HAMAP" id="MF_03154">
    <property type="entry name" value="Salvage_MtnD_euk"/>
    <property type="match status" value="1"/>
</dbReference>
<dbReference type="InterPro" id="IPR004313">
    <property type="entry name" value="ARD"/>
</dbReference>
<dbReference type="InterPro" id="IPR027496">
    <property type="entry name" value="ARD_euk"/>
</dbReference>
<dbReference type="InterPro" id="IPR014710">
    <property type="entry name" value="RmlC-like_jellyroll"/>
</dbReference>
<dbReference type="InterPro" id="IPR011051">
    <property type="entry name" value="RmlC_Cupin_sf"/>
</dbReference>
<dbReference type="PANTHER" id="PTHR23418">
    <property type="entry name" value="ACIREDUCTONE DIOXYGENASE"/>
    <property type="match status" value="1"/>
</dbReference>
<dbReference type="PANTHER" id="PTHR23418:SF0">
    <property type="entry name" value="ACIREDUCTONE DIOXYGENASE"/>
    <property type="match status" value="1"/>
</dbReference>
<dbReference type="Pfam" id="PF03079">
    <property type="entry name" value="ARD"/>
    <property type="match status" value="1"/>
</dbReference>
<dbReference type="SUPFAM" id="SSF51182">
    <property type="entry name" value="RmlC-like cupins"/>
    <property type="match status" value="1"/>
</dbReference>
<reference key="1">
    <citation type="journal article" date="2013" name="Nature">
        <title>The zebrafish reference genome sequence and its relationship to the human genome.</title>
        <authorList>
            <person name="Howe K."/>
            <person name="Clark M.D."/>
            <person name="Torroja C.F."/>
            <person name="Torrance J."/>
            <person name="Berthelot C."/>
            <person name="Muffato M."/>
            <person name="Collins J.E."/>
            <person name="Humphray S."/>
            <person name="McLaren K."/>
            <person name="Matthews L."/>
            <person name="McLaren S."/>
            <person name="Sealy I."/>
            <person name="Caccamo M."/>
            <person name="Churcher C."/>
            <person name="Scott C."/>
            <person name="Barrett J.C."/>
            <person name="Koch R."/>
            <person name="Rauch G.J."/>
            <person name="White S."/>
            <person name="Chow W."/>
            <person name="Kilian B."/>
            <person name="Quintais L.T."/>
            <person name="Guerra-Assuncao J.A."/>
            <person name="Zhou Y."/>
            <person name="Gu Y."/>
            <person name="Yen J."/>
            <person name="Vogel J.H."/>
            <person name="Eyre T."/>
            <person name="Redmond S."/>
            <person name="Banerjee R."/>
            <person name="Chi J."/>
            <person name="Fu B."/>
            <person name="Langley E."/>
            <person name="Maguire S.F."/>
            <person name="Laird G.K."/>
            <person name="Lloyd D."/>
            <person name="Kenyon E."/>
            <person name="Donaldson S."/>
            <person name="Sehra H."/>
            <person name="Almeida-King J."/>
            <person name="Loveland J."/>
            <person name="Trevanion S."/>
            <person name="Jones M."/>
            <person name="Quail M."/>
            <person name="Willey D."/>
            <person name="Hunt A."/>
            <person name="Burton J."/>
            <person name="Sims S."/>
            <person name="McLay K."/>
            <person name="Plumb B."/>
            <person name="Davis J."/>
            <person name="Clee C."/>
            <person name="Oliver K."/>
            <person name="Clark R."/>
            <person name="Riddle C."/>
            <person name="Elliot D."/>
            <person name="Threadgold G."/>
            <person name="Harden G."/>
            <person name="Ware D."/>
            <person name="Begum S."/>
            <person name="Mortimore B."/>
            <person name="Kerry G."/>
            <person name="Heath P."/>
            <person name="Phillimore B."/>
            <person name="Tracey A."/>
            <person name="Corby N."/>
            <person name="Dunn M."/>
            <person name="Johnson C."/>
            <person name="Wood J."/>
            <person name="Clark S."/>
            <person name="Pelan S."/>
            <person name="Griffiths G."/>
            <person name="Smith M."/>
            <person name="Glithero R."/>
            <person name="Howden P."/>
            <person name="Barker N."/>
            <person name="Lloyd C."/>
            <person name="Stevens C."/>
            <person name="Harley J."/>
            <person name="Holt K."/>
            <person name="Panagiotidis G."/>
            <person name="Lovell J."/>
            <person name="Beasley H."/>
            <person name="Henderson C."/>
            <person name="Gordon D."/>
            <person name="Auger K."/>
            <person name="Wright D."/>
            <person name="Collins J."/>
            <person name="Raisen C."/>
            <person name="Dyer L."/>
            <person name="Leung K."/>
            <person name="Robertson L."/>
            <person name="Ambridge K."/>
            <person name="Leongamornlert D."/>
            <person name="McGuire S."/>
            <person name="Gilderthorp R."/>
            <person name="Griffiths C."/>
            <person name="Manthravadi D."/>
            <person name="Nichol S."/>
            <person name="Barker G."/>
            <person name="Whitehead S."/>
            <person name="Kay M."/>
            <person name="Brown J."/>
            <person name="Murnane C."/>
            <person name="Gray E."/>
            <person name="Humphries M."/>
            <person name="Sycamore N."/>
            <person name="Barker D."/>
            <person name="Saunders D."/>
            <person name="Wallis J."/>
            <person name="Babbage A."/>
            <person name="Hammond S."/>
            <person name="Mashreghi-Mohammadi M."/>
            <person name="Barr L."/>
            <person name="Martin S."/>
            <person name="Wray P."/>
            <person name="Ellington A."/>
            <person name="Matthews N."/>
            <person name="Ellwood M."/>
            <person name="Woodmansey R."/>
            <person name="Clark G."/>
            <person name="Cooper J."/>
            <person name="Tromans A."/>
            <person name="Grafham D."/>
            <person name="Skuce C."/>
            <person name="Pandian R."/>
            <person name="Andrews R."/>
            <person name="Harrison E."/>
            <person name="Kimberley A."/>
            <person name="Garnett J."/>
            <person name="Fosker N."/>
            <person name="Hall R."/>
            <person name="Garner P."/>
            <person name="Kelly D."/>
            <person name="Bird C."/>
            <person name="Palmer S."/>
            <person name="Gehring I."/>
            <person name="Berger A."/>
            <person name="Dooley C.M."/>
            <person name="Ersan-Urun Z."/>
            <person name="Eser C."/>
            <person name="Geiger H."/>
            <person name="Geisler M."/>
            <person name="Karotki L."/>
            <person name="Kirn A."/>
            <person name="Konantz J."/>
            <person name="Konantz M."/>
            <person name="Oberlander M."/>
            <person name="Rudolph-Geiger S."/>
            <person name="Teucke M."/>
            <person name="Lanz C."/>
            <person name="Raddatz G."/>
            <person name="Osoegawa K."/>
            <person name="Zhu B."/>
            <person name="Rapp A."/>
            <person name="Widaa S."/>
            <person name="Langford C."/>
            <person name="Yang F."/>
            <person name="Schuster S.C."/>
            <person name="Carter N.P."/>
            <person name="Harrow J."/>
            <person name="Ning Z."/>
            <person name="Herrero J."/>
            <person name="Searle S.M."/>
            <person name="Enright A."/>
            <person name="Geisler R."/>
            <person name="Plasterk R.H."/>
            <person name="Lee C."/>
            <person name="Westerfield M."/>
            <person name="de Jong P.J."/>
            <person name="Zon L.I."/>
            <person name="Postlethwait J.H."/>
            <person name="Nusslein-Volhard C."/>
            <person name="Hubbard T.J."/>
            <person name="Roest Crollius H."/>
            <person name="Rogers J."/>
            <person name="Stemple D.L."/>
        </authorList>
    </citation>
    <scope>NUCLEOTIDE SEQUENCE [LARGE SCALE GENOMIC DNA]</scope>
    <source>
        <strain>Tuebingen</strain>
    </source>
</reference>
<reference key="2">
    <citation type="submission" date="2003-10" db="EMBL/GenBank/DDBJ databases">
        <authorList>
            <consortium name="NIH - Zebrafish Gene Collection (ZGC) project"/>
        </authorList>
    </citation>
    <scope>NUCLEOTIDE SEQUENCE [LARGE SCALE MRNA]</scope>
    <source>
        <tissue>Retina</tissue>
    </source>
</reference>
<sequence>MSVFEAWYMDEESGEDQRLPHKLSPNQPVSVQQLEHIGVFHWKLNADIYENDPELQKIREEKGYSFMDIITIHPDKLPDYQNKLKMFYEEHLHLDDEIRYILEGSSYFDVRDEGDRWIRIAVSKGDLITLPAGIYHRFTVDESNYTKAMRLFVGEPVWKAYNRPADDFDIRKEYVNSLGSS</sequence>